<feature type="chain" id="PRO_0000195293" description="Glucose-1-phosphate adenylyltransferase">
    <location>
        <begin position="1"/>
        <end position="413"/>
    </location>
</feature>
<feature type="binding site" evidence="1">
    <location>
        <position position="102"/>
    </location>
    <ligand>
        <name>alpha-D-glucose 1-phosphate</name>
        <dbReference type="ChEBI" id="CHEBI:58601"/>
    </ligand>
</feature>
<feature type="binding site" evidence="1">
    <location>
        <position position="167"/>
    </location>
    <ligand>
        <name>alpha-D-glucose 1-phosphate</name>
        <dbReference type="ChEBI" id="CHEBI:58601"/>
    </ligand>
</feature>
<feature type="binding site" evidence="1">
    <location>
        <begin position="182"/>
        <end position="183"/>
    </location>
    <ligand>
        <name>alpha-D-glucose 1-phosphate</name>
        <dbReference type="ChEBI" id="CHEBI:58601"/>
    </ligand>
</feature>
<feature type="binding site" evidence="1">
    <location>
        <position position="200"/>
    </location>
    <ligand>
        <name>alpha-D-glucose 1-phosphate</name>
        <dbReference type="ChEBI" id="CHEBI:58601"/>
    </ligand>
</feature>
<reference key="1">
    <citation type="journal article" date="1999" name="Science">
        <title>Genome sequence of the radioresistant bacterium Deinococcus radiodurans R1.</title>
        <authorList>
            <person name="White O."/>
            <person name="Eisen J.A."/>
            <person name="Heidelberg J.F."/>
            <person name="Hickey E.K."/>
            <person name="Peterson J.D."/>
            <person name="Dodson R.J."/>
            <person name="Haft D.H."/>
            <person name="Gwinn M.L."/>
            <person name="Nelson W.C."/>
            <person name="Richardson D.L."/>
            <person name="Moffat K.S."/>
            <person name="Qin H."/>
            <person name="Jiang L."/>
            <person name="Pamphile W."/>
            <person name="Crosby M."/>
            <person name="Shen M."/>
            <person name="Vamathevan J.J."/>
            <person name="Lam P."/>
            <person name="McDonald L.A."/>
            <person name="Utterback T.R."/>
            <person name="Zalewski C."/>
            <person name="Makarova K.S."/>
            <person name="Aravind L."/>
            <person name="Daly M.J."/>
            <person name="Minton K.W."/>
            <person name="Fleischmann R.D."/>
            <person name="Ketchum K.A."/>
            <person name="Nelson K.E."/>
            <person name="Salzberg S.L."/>
            <person name="Smith H.O."/>
            <person name="Venter J.C."/>
            <person name="Fraser C.M."/>
        </authorList>
    </citation>
    <scope>NUCLEOTIDE SEQUENCE [LARGE SCALE GENOMIC DNA]</scope>
    <source>
        <strain>ATCC 13939 / DSM 20539 / JCM 16871 / CCUG 27074 / LMG 4051 / NBRC 15346 / NCIMB 9279 / VKM B-1422 / R1</strain>
    </source>
</reference>
<protein>
    <recommendedName>
        <fullName evidence="1">Glucose-1-phosphate adenylyltransferase</fullName>
        <ecNumber evidence="1">2.7.7.27</ecNumber>
    </recommendedName>
    <alternativeName>
        <fullName evidence="1">ADP-glucose pyrophosphorylase</fullName>
        <shortName evidence="1">ADPGlc PPase</shortName>
    </alternativeName>
    <alternativeName>
        <fullName evidence="1">ADP-glucose synthase</fullName>
    </alternativeName>
</protein>
<name>GLGC_DEIRA</name>
<organism>
    <name type="scientific">Deinococcus radiodurans (strain ATCC 13939 / DSM 20539 / JCM 16871 / CCUG 27074 / LMG 4051 / NBRC 15346 / NCIMB 9279 / VKM B-1422 / R1)</name>
    <dbReference type="NCBI Taxonomy" id="243230"/>
    <lineage>
        <taxon>Bacteria</taxon>
        <taxon>Thermotogati</taxon>
        <taxon>Deinococcota</taxon>
        <taxon>Deinococci</taxon>
        <taxon>Deinococcales</taxon>
        <taxon>Deinococcaceae</taxon>
        <taxon>Deinococcus</taxon>
    </lineage>
</organism>
<keyword id="KW-0067">ATP-binding</keyword>
<keyword id="KW-0119">Carbohydrate metabolism</keyword>
<keyword id="KW-0320">Glycogen biosynthesis</keyword>
<keyword id="KW-0321">Glycogen metabolism</keyword>
<keyword id="KW-0547">Nucleotide-binding</keyword>
<keyword id="KW-0548">Nucleotidyltransferase</keyword>
<keyword id="KW-1185">Reference proteome</keyword>
<keyword id="KW-0808">Transferase</keyword>
<gene>
    <name evidence="1" type="primary">glgC</name>
    <name type="ordered locus">DR_1689</name>
</gene>
<proteinExistence type="inferred from homology"/>
<accession>Q9RTR7</accession>
<sequence length="413" mass="46708">MKPRVLGMILAGGQGSRLAPLTQKRSKPAVPFGSKYRIIDFAINNFINSGMFSVYVLTQYKAQSLTEHIQRGWRFGTFLSDYFITLVPAQMYRFEELGDAWYRGTADAVYQNMHLIDNFEADYVAIFSGDHIYKMNVEHMLEKHIETRADVTIAAYPMPQSQAHQFGVMQVDERWRVTEFHEKVPDPPTIPGQADLSLTSMGNYIFSRRALEELLEASISGQETGYDFGHNVIPRALSDGYHVQAYDFHKNPIPGQERPNTYWRDVGTLDAYFEANMDLVSVNPEFDIYNPEWPLRTSSEFSPPAKFVHESEGRKGQAFNSIMAGGAIISGGTVRDSVLGRNVRTHSYSLVESCVLFDDVQVGRHSHLRRVIVDKDVVIPPGTTIGLNREHDEQRGFTVTEHGVVVVPKGYVF</sequence>
<dbReference type="EC" id="2.7.7.27" evidence="1"/>
<dbReference type="EMBL" id="AE000513">
    <property type="protein sequence ID" value="AAF11244.1"/>
    <property type="status" value="ALT_INIT"/>
    <property type="molecule type" value="Genomic_DNA"/>
</dbReference>
<dbReference type="PIR" id="G75366">
    <property type="entry name" value="G75366"/>
</dbReference>
<dbReference type="RefSeq" id="NP_295412.1">
    <property type="nucleotide sequence ID" value="NC_001263.1"/>
</dbReference>
<dbReference type="RefSeq" id="WP_027479907.1">
    <property type="nucleotide sequence ID" value="NC_001263.1"/>
</dbReference>
<dbReference type="SMR" id="Q9RTR7"/>
<dbReference type="FunCoup" id="Q9RTR7">
    <property type="interactions" value="131"/>
</dbReference>
<dbReference type="STRING" id="243230.DR_1689"/>
<dbReference type="PaxDb" id="243230-DR_1689"/>
<dbReference type="EnsemblBacteria" id="AAF11244">
    <property type="protein sequence ID" value="AAF11244"/>
    <property type="gene ID" value="DR_1689"/>
</dbReference>
<dbReference type="GeneID" id="69517925"/>
<dbReference type="KEGG" id="dra:DR_1689"/>
<dbReference type="PATRIC" id="fig|243230.17.peg.1898"/>
<dbReference type="eggNOG" id="COG0448">
    <property type="taxonomic scope" value="Bacteria"/>
</dbReference>
<dbReference type="HOGENOM" id="CLU_029499_14_1_0"/>
<dbReference type="InParanoid" id="Q9RTR7"/>
<dbReference type="OrthoDB" id="9801810at2"/>
<dbReference type="UniPathway" id="UPA00164"/>
<dbReference type="Proteomes" id="UP000002524">
    <property type="component" value="Chromosome 1"/>
</dbReference>
<dbReference type="GO" id="GO:0005524">
    <property type="term" value="F:ATP binding"/>
    <property type="evidence" value="ECO:0007669"/>
    <property type="project" value="UniProtKB-KW"/>
</dbReference>
<dbReference type="GO" id="GO:0008878">
    <property type="term" value="F:glucose-1-phosphate adenylyltransferase activity"/>
    <property type="evidence" value="ECO:0007669"/>
    <property type="project" value="UniProtKB-UniRule"/>
</dbReference>
<dbReference type="GO" id="GO:0005978">
    <property type="term" value="P:glycogen biosynthetic process"/>
    <property type="evidence" value="ECO:0007669"/>
    <property type="project" value="UniProtKB-UniRule"/>
</dbReference>
<dbReference type="CDD" id="cd02508">
    <property type="entry name" value="ADP_Glucose_PP"/>
    <property type="match status" value="1"/>
</dbReference>
<dbReference type="CDD" id="cd04651">
    <property type="entry name" value="LbH_G1P_AT_C"/>
    <property type="match status" value="1"/>
</dbReference>
<dbReference type="Gene3D" id="2.160.10.10">
    <property type="entry name" value="Hexapeptide repeat proteins"/>
    <property type="match status" value="1"/>
</dbReference>
<dbReference type="Gene3D" id="3.90.550.10">
    <property type="entry name" value="Spore Coat Polysaccharide Biosynthesis Protein SpsA, Chain A"/>
    <property type="match status" value="1"/>
</dbReference>
<dbReference type="HAMAP" id="MF_00624">
    <property type="entry name" value="GlgC"/>
    <property type="match status" value="1"/>
</dbReference>
<dbReference type="InterPro" id="IPR011831">
    <property type="entry name" value="ADP-Glc_PPase"/>
</dbReference>
<dbReference type="InterPro" id="IPR005836">
    <property type="entry name" value="ADP_Glu_pyroP_CS"/>
</dbReference>
<dbReference type="InterPro" id="IPR023049">
    <property type="entry name" value="GlgC_bac"/>
</dbReference>
<dbReference type="InterPro" id="IPR056818">
    <property type="entry name" value="GlmU/GlgC-like_hexapep"/>
</dbReference>
<dbReference type="InterPro" id="IPR005835">
    <property type="entry name" value="NTP_transferase_dom"/>
</dbReference>
<dbReference type="InterPro" id="IPR029044">
    <property type="entry name" value="Nucleotide-diphossugar_trans"/>
</dbReference>
<dbReference type="InterPro" id="IPR011004">
    <property type="entry name" value="Trimer_LpxA-like_sf"/>
</dbReference>
<dbReference type="NCBIfam" id="TIGR02091">
    <property type="entry name" value="glgC"/>
    <property type="match status" value="1"/>
</dbReference>
<dbReference type="NCBIfam" id="NF001947">
    <property type="entry name" value="PRK00725.1"/>
    <property type="match status" value="1"/>
</dbReference>
<dbReference type="NCBIfam" id="NF002023">
    <property type="entry name" value="PRK00844.1"/>
    <property type="match status" value="1"/>
</dbReference>
<dbReference type="PANTHER" id="PTHR43523:SF2">
    <property type="entry name" value="GLUCOSE-1-PHOSPHATE ADENYLYLTRANSFERASE"/>
    <property type="match status" value="1"/>
</dbReference>
<dbReference type="PANTHER" id="PTHR43523">
    <property type="entry name" value="GLUCOSE-1-PHOSPHATE ADENYLYLTRANSFERASE-RELATED"/>
    <property type="match status" value="1"/>
</dbReference>
<dbReference type="Pfam" id="PF24894">
    <property type="entry name" value="Hexapep_GlmU"/>
    <property type="match status" value="1"/>
</dbReference>
<dbReference type="Pfam" id="PF00483">
    <property type="entry name" value="NTP_transferase"/>
    <property type="match status" value="1"/>
</dbReference>
<dbReference type="SUPFAM" id="SSF53448">
    <property type="entry name" value="Nucleotide-diphospho-sugar transferases"/>
    <property type="match status" value="1"/>
</dbReference>
<dbReference type="SUPFAM" id="SSF51161">
    <property type="entry name" value="Trimeric LpxA-like enzymes"/>
    <property type="match status" value="1"/>
</dbReference>
<dbReference type="PROSITE" id="PS00808">
    <property type="entry name" value="ADP_GLC_PYROPHOSPH_1"/>
    <property type="match status" value="1"/>
</dbReference>
<dbReference type="PROSITE" id="PS00809">
    <property type="entry name" value="ADP_GLC_PYROPHOSPH_2"/>
    <property type="match status" value="1"/>
</dbReference>
<evidence type="ECO:0000255" key="1">
    <source>
        <dbReference type="HAMAP-Rule" id="MF_00624"/>
    </source>
</evidence>
<evidence type="ECO:0000305" key="2"/>
<comment type="function">
    <text evidence="1">Involved in the biosynthesis of ADP-glucose, a building block required for the elongation reactions to produce glycogen. Catalyzes the reaction between ATP and alpha-D-glucose 1-phosphate (G1P) to produce pyrophosphate and ADP-Glc.</text>
</comment>
<comment type="catalytic activity">
    <reaction evidence="1">
        <text>alpha-D-glucose 1-phosphate + ATP + H(+) = ADP-alpha-D-glucose + diphosphate</text>
        <dbReference type="Rhea" id="RHEA:12120"/>
        <dbReference type="ChEBI" id="CHEBI:15378"/>
        <dbReference type="ChEBI" id="CHEBI:30616"/>
        <dbReference type="ChEBI" id="CHEBI:33019"/>
        <dbReference type="ChEBI" id="CHEBI:57498"/>
        <dbReference type="ChEBI" id="CHEBI:58601"/>
        <dbReference type="EC" id="2.7.7.27"/>
    </reaction>
</comment>
<comment type="pathway">
    <text evidence="1">Glycan biosynthesis; glycogen biosynthesis.</text>
</comment>
<comment type="subunit">
    <text evidence="1">Homotetramer.</text>
</comment>
<comment type="similarity">
    <text evidence="1">Belongs to the bacterial/plant glucose-1-phosphate adenylyltransferase family.</text>
</comment>
<comment type="sequence caution" evidence="2">
    <conflict type="erroneous initiation">
        <sequence resource="EMBL-CDS" id="AAF11244"/>
    </conflict>
</comment>